<protein>
    <recommendedName>
        <fullName evidence="1">Ascorbate-specific PTS system EIIC component</fullName>
    </recommendedName>
    <alternativeName>
        <fullName evidence="1">Ascorbate-specific permease IIC component UlaA</fullName>
    </alternativeName>
</protein>
<feature type="chain" id="PRO_0000230662" description="Ascorbate-specific PTS system EIIC component">
    <location>
        <begin position="1"/>
        <end position="465"/>
    </location>
</feature>
<feature type="transmembrane region" description="Helical" evidence="1">
    <location>
        <begin position="14"/>
        <end position="34"/>
    </location>
</feature>
<feature type="transmembrane region" description="Helical" evidence="1">
    <location>
        <begin position="38"/>
        <end position="58"/>
    </location>
</feature>
<feature type="transmembrane region" description="Helical" evidence="1">
    <location>
        <begin position="101"/>
        <end position="121"/>
    </location>
</feature>
<feature type="transmembrane region" description="Helical" evidence="1">
    <location>
        <begin position="141"/>
        <end position="161"/>
    </location>
</feature>
<feature type="transmembrane region" description="Helical" evidence="1">
    <location>
        <begin position="233"/>
        <end position="253"/>
    </location>
</feature>
<feature type="transmembrane region" description="Helical" evidence="1">
    <location>
        <begin position="263"/>
        <end position="283"/>
    </location>
</feature>
<feature type="transmembrane region" description="Helical" evidence="1">
    <location>
        <begin position="316"/>
        <end position="336"/>
    </location>
</feature>
<feature type="transmembrane region" description="Helical" evidence="1">
    <location>
        <begin position="338"/>
        <end position="358"/>
    </location>
</feature>
<feature type="transmembrane region" description="Helical" evidence="1">
    <location>
        <begin position="379"/>
        <end position="399"/>
    </location>
</feature>
<feature type="transmembrane region" description="Helical" evidence="1">
    <location>
        <begin position="427"/>
        <end position="447"/>
    </location>
</feature>
<feature type="binding site" evidence="1">
    <location>
        <begin position="86"/>
        <end position="87"/>
    </location>
    <ligand>
        <name>L-ascorbate</name>
        <dbReference type="ChEBI" id="CHEBI:38290"/>
    </ligand>
</feature>
<feature type="binding site" evidence="1">
    <location>
        <begin position="135"/>
        <end position="139"/>
    </location>
    <ligand>
        <name>L-ascorbate</name>
        <dbReference type="ChEBI" id="CHEBI:38290"/>
    </ligand>
</feature>
<feature type="binding site" evidence="1">
    <location>
        <begin position="194"/>
        <end position="195"/>
    </location>
    <ligand>
        <name>L-ascorbate</name>
        <dbReference type="ChEBI" id="CHEBI:38290"/>
    </ligand>
</feature>
<feature type="binding site" evidence="1">
    <location>
        <position position="314"/>
    </location>
    <ligand>
        <name>L-ascorbate</name>
        <dbReference type="ChEBI" id="CHEBI:38290"/>
    </ligand>
</feature>
<reference key="1">
    <citation type="journal article" date="2005" name="Nucleic Acids Res.">
        <title>Genome dynamics and diversity of Shigella species, the etiologic agents of bacillary dysentery.</title>
        <authorList>
            <person name="Yang F."/>
            <person name="Yang J."/>
            <person name="Zhang X."/>
            <person name="Chen L."/>
            <person name="Jiang Y."/>
            <person name="Yan Y."/>
            <person name="Tang X."/>
            <person name="Wang J."/>
            <person name="Xiong Z."/>
            <person name="Dong J."/>
            <person name="Xue Y."/>
            <person name="Zhu Y."/>
            <person name="Xu X."/>
            <person name="Sun L."/>
            <person name="Chen S."/>
            <person name="Nie H."/>
            <person name="Peng J."/>
            <person name="Xu J."/>
            <person name="Wang Y."/>
            <person name="Yuan Z."/>
            <person name="Wen Y."/>
            <person name="Yao Z."/>
            <person name="Shen Y."/>
            <person name="Qiang B."/>
            <person name="Hou Y."/>
            <person name="Yu J."/>
            <person name="Jin Q."/>
        </authorList>
    </citation>
    <scope>NUCLEOTIDE SEQUENCE [LARGE SCALE GENOMIC DNA]</scope>
    <source>
        <strain>Sd197</strain>
    </source>
</reference>
<organism>
    <name type="scientific">Shigella dysenteriae serotype 1 (strain Sd197)</name>
    <dbReference type="NCBI Taxonomy" id="300267"/>
    <lineage>
        <taxon>Bacteria</taxon>
        <taxon>Pseudomonadati</taxon>
        <taxon>Pseudomonadota</taxon>
        <taxon>Gammaproteobacteria</taxon>
        <taxon>Enterobacterales</taxon>
        <taxon>Enterobacteriaceae</taxon>
        <taxon>Shigella</taxon>
    </lineage>
</organism>
<evidence type="ECO:0000250" key="1">
    <source>
        <dbReference type="UniProtKB" id="P39301"/>
    </source>
</evidence>
<evidence type="ECO:0000305" key="2"/>
<proteinExistence type="inferred from homology"/>
<dbReference type="EMBL" id="CP000034">
    <property type="protein sequence ID" value="ABB64251.1"/>
    <property type="status" value="ALT_INIT"/>
    <property type="molecule type" value="Genomic_DNA"/>
</dbReference>
<dbReference type="RefSeq" id="WP_005021471.1">
    <property type="nucleotide sequence ID" value="NC_007606.1"/>
</dbReference>
<dbReference type="RefSeq" id="YP_405742.2">
    <property type="nucleotide sequence ID" value="NC_007606.1"/>
</dbReference>
<dbReference type="SMR" id="Q328K4"/>
<dbReference type="STRING" id="300267.SDY_4362"/>
<dbReference type="EnsemblBacteria" id="ABB64251">
    <property type="protein sequence ID" value="ABB64251"/>
    <property type="gene ID" value="SDY_4362"/>
</dbReference>
<dbReference type="KEGG" id="sdy:SDY_4362"/>
<dbReference type="PATRIC" id="fig|300267.13.peg.5150"/>
<dbReference type="HOGENOM" id="CLU_031784_1_0_6"/>
<dbReference type="Proteomes" id="UP000002716">
    <property type="component" value="Chromosome"/>
</dbReference>
<dbReference type="GO" id="GO:0005886">
    <property type="term" value="C:plasma membrane"/>
    <property type="evidence" value="ECO:0007669"/>
    <property type="project" value="UniProtKB-SubCell"/>
</dbReference>
<dbReference type="GO" id="GO:0009401">
    <property type="term" value="P:phosphoenolpyruvate-dependent sugar phosphotransferase system"/>
    <property type="evidence" value="ECO:0007669"/>
    <property type="project" value="UniProtKB-KW"/>
</dbReference>
<dbReference type="InterPro" id="IPR051562">
    <property type="entry name" value="Ascorbate-PTS_EIIC"/>
</dbReference>
<dbReference type="InterPro" id="IPR004703">
    <property type="entry name" value="PTS_sugar-sp_permease"/>
</dbReference>
<dbReference type="NCBIfam" id="NF006919">
    <property type="entry name" value="PRK09410.1-1"/>
    <property type="match status" value="1"/>
</dbReference>
<dbReference type="PANTHER" id="PTHR33843">
    <property type="entry name" value="ASCORBATE-SPECIFIC PTS SYSTEM EIIC COMPONENT"/>
    <property type="match status" value="1"/>
</dbReference>
<dbReference type="PANTHER" id="PTHR33843:SF4">
    <property type="entry name" value="ASCORBATE-SPECIFIC PTS SYSTEM EIIC COMPONENT"/>
    <property type="match status" value="1"/>
</dbReference>
<dbReference type="Pfam" id="PF03611">
    <property type="entry name" value="EIIC-GAT"/>
    <property type="match status" value="1"/>
</dbReference>
<comment type="function">
    <text evidence="1">The phosphoenolpyruvate-dependent sugar phosphotransferase system (sugar PTS), a major carbohydrate active transport system, catalyzes the phosphorylation of incoming sugar substrates concomitantly with their translocation across the cell membrane. The enzyme II UlaABC PTS system is involved in ascorbate transport.</text>
</comment>
<comment type="subunit">
    <text evidence="1">Homodimer.</text>
</comment>
<comment type="subcellular location">
    <subcellularLocation>
        <location evidence="1">Cell inner membrane</location>
        <topology evidence="1">Multi-pass membrane protein</topology>
    </subcellularLocation>
</comment>
<comment type="induction">
    <text evidence="1">Induced by L-ascorbate. Repressed by UlaR.</text>
</comment>
<comment type="domain">
    <text evidence="1">In classical PTS systems, the PTS EIIC type-2 domain forms the translocation channel and contains the specific substrate-binding site. UlaA does not exhibit the topological features of any recognized enzyme IIC.</text>
</comment>
<comment type="similarity">
    <text evidence="2">Belongs to the UlaA family.</text>
</comment>
<comment type="sequence caution" evidence="2">
    <conflict type="erroneous initiation">
        <sequence resource="EMBL-CDS" id="ABB64251"/>
    </conflict>
</comment>
<name>ULAA_SHIDS</name>
<keyword id="KW-0997">Cell inner membrane</keyword>
<keyword id="KW-1003">Cell membrane</keyword>
<keyword id="KW-0472">Membrane</keyword>
<keyword id="KW-0598">Phosphotransferase system</keyword>
<keyword id="KW-1185">Reference proteome</keyword>
<keyword id="KW-0762">Sugar transport</keyword>
<keyword id="KW-0812">Transmembrane</keyword>
<keyword id="KW-1133">Transmembrane helix</keyword>
<keyword id="KW-0813">Transport</keyword>
<accession>Q328K4</accession>
<sequence length="465" mass="50750">MEILYNIFTVFFNQVMTNAPLLLGIVTCLGYILLRKSVSVIIKGTIKTIIGFMLLQAGSGILTSTFKPVVAKMSEVYGINGAISDNYASMMATIDRMGDAYSWVGYAVLLALALNICYVLLRRITGIRTIMLTGHIMFQQAGLIAVTLFIFGYSMWTTIICTAILVSLYWGITSNMMYKPTQEVTDGCGFSIGHQQQFASWIAYKVAPFLGKKEESVEDLKLPGWLNIFHDNIVSTAIVMTIFFGAILLSFGIDTVQAMAGKVHWTVYILQTGFSFAVAIFIITQGVRMFVAELSEAFNGISQRLIPGAVLAIDCAAIYSFAPNAVVWGFMWGTIGQLIAVGILVACGSSILIIPGFIPMFFSNATIGVFANHFGGWRAALKICLVMGMIEIFGCVWAVKLTGMSAWMGMADWSILAPPMMQGFFSIGIAFMAVIIVIALAYMFFAGRALRAEEDAEKQLAEQSA</sequence>
<gene>
    <name type="primary">ulaA</name>
    <name type="ordered locus">SDY_4362</name>
</gene>